<comment type="function">
    <text evidence="5">May be involved in osmotic stress and abscisic acid signaling in a calcium-dependent manner.</text>
</comment>
<comment type="tissue specificity">
    <text evidence="4">Expressed mainly in roots and flowers. Lower in stems and leaves.</text>
</comment>
<comment type="induction">
    <text evidence="5 6">Up-regulated by salt, osmotic and oxidative stresses. Up-regulated by abscisic acid (ABA) and salicylic acid (SA). Down-regulated by heat shock and dehydration stresses.</text>
</comment>
<comment type="domain">
    <text>A pair of annexin repeats may form one binding site for calcium and phospholipid.</text>
</comment>
<comment type="disruption phenotype">
    <text evidence="5">Plants are hypersensitive to osmotic stress and abscisic acid (ABA) during germination and early seedling growth.</text>
</comment>
<comment type="similarity">
    <text evidence="8">Belongs to the annexin (TC 1.A.31.1) family.</text>
</comment>
<protein>
    <recommendedName>
        <fullName>Annexin D4</fullName>
    </recommendedName>
    <alternativeName>
        <fullName>AnnAt4</fullName>
    </alternativeName>
</protein>
<feature type="chain" id="PRO_0000278818" description="Annexin D4">
    <location>
        <begin position="1"/>
        <end position="319"/>
    </location>
</feature>
<feature type="repeat" description="Annexin 1" evidence="3">
    <location>
        <begin position="1"/>
        <end position="75"/>
    </location>
</feature>
<feature type="repeat" description="Annexin 2" evidence="3">
    <location>
        <begin position="86"/>
        <end position="157"/>
    </location>
</feature>
<feature type="repeat" description="Annexin 3" evidence="3">
    <location>
        <begin position="169"/>
        <end position="240"/>
    </location>
</feature>
<feature type="repeat" description="Annexin 4" evidence="3">
    <location>
        <begin position="241"/>
        <end position="316"/>
    </location>
</feature>
<feature type="binding site" evidence="1">
    <location>
        <position position="19"/>
    </location>
    <ligand>
        <name>Ca(2+)</name>
        <dbReference type="ChEBI" id="CHEBI:29108"/>
        <label>1</label>
    </ligand>
</feature>
<feature type="binding site" evidence="1">
    <location>
        <position position="21"/>
    </location>
    <ligand>
        <name>Ca(2+)</name>
        <dbReference type="ChEBI" id="CHEBI:29108"/>
        <label>1</label>
    </ligand>
</feature>
<feature type="binding site" evidence="1">
    <location>
        <position position="72"/>
    </location>
    <ligand>
        <name>Ca(2+)</name>
        <dbReference type="ChEBI" id="CHEBI:29108"/>
        <label>1</label>
    </ligand>
</feature>
<feature type="modified residue" description="Phosphothreonine" evidence="2">
    <location>
        <position position="115"/>
    </location>
</feature>
<feature type="modified residue" description="Phosphotyrosine" evidence="2">
    <location>
        <position position="159"/>
    </location>
</feature>
<feature type="modified residue" description="Phosphotyrosine" evidence="7">
    <location>
        <position position="211"/>
    </location>
</feature>
<feature type="modified residue" description="Phosphoserine" evidence="7">
    <location>
        <position position="277"/>
    </location>
</feature>
<feature type="modified residue" description="Phosphotyrosine" evidence="2">
    <location>
        <position position="287"/>
    </location>
</feature>
<organism>
    <name type="scientific">Arabidopsis thaliana</name>
    <name type="common">Mouse-ear cress</name>
    <dbReference type="NCBI Taxonomy" id="3702"/>
    <lineage>
        <taxon>Eukaryota</taxon>
        <taxon>Viridiplantae</taxon>
        <taxon>Streptophyta</taxon>
        <taxon>Embryophyta</taxon>
        <taxon>Tracheophyta</taxon>
        <taxon>Spermatophyta</taxon>
        <taxon>Magnoliopsida</taxon>
        <taxon>eudicotyledons</taxon>
        <taxon>Gunneridae</taxon>
        <taxon>Pentapetalae</taxon>
        <taxon>rosids</taxon>
        <taxon>malvids</taxon>
        <taxon>Brassicales</taxon>
        <taxon>Brassicaceae</taxon>
        <taxon>Camelineae</taxon>
        <taxon>Arabidopsis</taxon>
    </lineage>
</organism>
<evidence type="ECO:0000250" key="1">
    <source>
        <dbReference type="UniProtKB" id="P93157"/>
    </source>
</evidence>
<evidence type="ECO:0000250" key="2">
    <source>
        <dbReference type="UniProtKB" id="Q9SYT0"/>
    </source>
</evidence>
<evidence type="ECO:0000255" key="3">
    <source>
        <dbReference type="PROSITE-ProRule" id="PRU01245"/>
    </source>
</evidence>
<evidence type="ECO:0000269" key="4">
    <source>
    </source>
</evidence>
<evidence type="ECO:0000269" key="5">
    <source>
    </source>
</evidence>
<evidence type="ECO:0000269" key="6">
    <source>
    </source>
</evidence>
<evidence type="ECO:0000269" key="7">
    <source>
    </source>
</evidence>
<evidence type="ECO:0000305" key="8"/>
<name>ANXD4_ARATH</name>
<gene>
    <name type="primary">ANN4</name>
    <name type="synonym">ANNAT4</name>
    <name type="ordered locus">At2g38750</name>
    <name type="ORF">T6A23.5</name>
</gene>
<keyword id="KW-0041">Annexin</keyword>
<keyword id="KW-0106">Calcium</keyword>
<keyword id="KW-0111">Calcium/phospholipid-binding</keyword>
<keyword id="KW-0479">Metal-binding</keyword>
<keyword id="KW-0597">Phosphoprotein</keyword>
<keyword id="KW-1185">Reference proteome</keyword>
<keyword id="KW-0677">Repeat</keyword>
<keyword id="KW-0346">Stress response</keyword>
<sequence length="319" mass="36221">MALPLELESLTEAISAGMGMGVDENALISTLGKSQKEHRKLFRKASKSFFVEDEERAFEKCHDHFVRHLKLEFSRFNTAVVMWAMHPWERDARLVKKALKKGEEAYNLIVEVSCTRSAEDLLGARKAYHSLFDQSMEEDIASHVHGPQRKLLVGLVSAYRYEGNKVKDDSAKSDAKILAEAVASSGEEAVEKDEVVRILTTRSKLHLQHLYKHFNEIKGSDLLGGVSKSSLLNEALICLLKPALYFSKILDASLNKDADKTTKKWLTRVFVTRADHSDEMNEIKEEYNNLYGETLAQRIQEKIKGNYRDFLLTLLSKSD</sequence>
<reference key="1">
    <citation type="online journal article" date="1999" name="Plant Gene Register">
        <title>Isolation and characterization of two novel Arabidopsis annexin cDNAs.</title>
        <authorList>
            <person name="Clark G.B."/>
            <person name="Rives A.E."/>
            <person name="Beauchamp L.M."/>
            <person name="Roux S.J."/>
        </authorList>
        <locator>PGR99-168</locator>
    </citation>
    <scope>NUCLEOTIDE SEQUENCE [MRNA]</scope>
</reference>
<reference key="2">
    <citation type="journal article" date="1999" name="Nature">
        <title>Sequence and analysis of chromosome 2 of the plant Arabidopsis thaliana.</title>
        <authorList>
            <person name="Lin X."/>
            <person name="Kaul S."/>
            <person name="Rounsley S.D."/>
            <person name="Shea T.P."/>
            <person name="Benito M.-I."/>
            <person name="Town C.D."/>
            <person name="Fujii C.Y."/>
            <person name="Mason T.M."/>
            <person name="Bowman C.L."/>
            <person name="Barnstead M.E."/>
            <person name="Feldblyum T.V."/>
            <person name="Buell C.R."/>
            <person name="Ketchum K.A."/>
            <person name="Lee J.J."/>
            <person name="Ronning C.M."/>
            <person name="Koo H.L."/>
            <person name="Moffat K.S."/>
            <person name="Cronin L.A."/>
            <person name="Shen M."/>
            <person name="Pai G."/>
            <person name="Van Aken S."/>
            <person name="Umayam L."/>
            <person name="Tallon L.J."/>
            <person name="Gill J.E."/>
            <person name="Adams M.D."/>
            <person name="Carrera A.J."/>
            <person name="Creasy T.H."/>
            <person name="Goodman H.M."/>
            <person name="Somerville C.R."/>
            <person name="Copenhaver G.P."/>
            <person name="Preuss D."/>
            <person name="Nierman W.C."/>
            <person name="White O."/>
            <person name="Eisen J.A."/>
            <person name="Salzberg S.L."/>
            <person name="Fraser C.M."/>
            <person name="Venter J.C."/>
        </authorList>
    </citation>
    <scope>NUCLEOTIDE SEQUENCE [LARGE SCALE GENOMIC DNA]</scope>
    <source>
        <strain>cv. Columbia</strain>
    </source>
</reference>
<reference key="3">
    <citation type="journal article" date="2017" name="Plant J.">
        <title>Araport11: a complete reannotation of the Arabidopsis thaliana reference genome.</title>
        <authorList>
            <person name="Cheng C.Y."/>
            <person name="Krishnakumar V."/>
            <person name="Chan A.P."/>
            <person name="Thibaud-Nissen F."/>
            <person name="Schobel S."/>
            <person name="Town C.D."/>
        </authorList>
    </citation>
    <scope>GENOME REANNOTATION</scope>
    <source>
        <strain>cv. Columbia</strain>
    </source>
</reference>
<reference key="4">
    <citation type="submission" date="2002-03" db="EMBL/GenBank/DDBJ databases">
        <title>Full-length cDNA from Arabidopsis thaliana.</title>
        <authorList>
            <person name="Brover V.V."/>
            <person name="Troukhan M.E."/>
            <person name="Alexandrov N.A."/>
            <person name="Lu Y.-P."/>
            <person name="Flavell R.B."/>
            <person name="Feldmann K.A."/>
        </authorList>
    </citation>
    <scope>NUCLEOTIDE SEQUENCE [LARGE SCALE MRNA]</scope>
</reference>
<reference key="5">
    <citation type="journal article" date="2003" name="Science">
        <title>Empirical analysis of transcriptional activity in the Arabidopsis genome.</title>
        <authorList>
            <person name="Yamada K."/>
            <person name="Lim J."/>
            <person name="Dale J.M."/>
            <person name="Chen H."/>
            <person name="Shinn P."/>
            <person name="Palm C.J."/>
            <person name="Southwick A.M."/>
            <person name="Wu H.C."/>
            <person name="Kim C.J."/>
            <person name="Nguyen M."/>
            <person name="Pham P.K."/>
            <person name="Cheuk R.F."/>
            <person name="Karlin-Newmann G."/>
            <person name="Liu S.X."/>
            <person name="Lam B."/>
            <person name="Sakano H."/>
            <person name="Wu T."/>
            <person name="Yu G."/>
            <person name="Miranda M."/>
            <person name="Quach H.L."/>
            <person name="Tripp M."/>
            <person name="Chang C.H."/>
            <person name="Lee J.M."/>
            <person name="Toriumi M.J."/>
            <person name="Chan M.M."/>
            <person name="Tang C.C."/>
            <person name="Onodera C.S."/>
            <person name="Deng J.M."/>
            <person name="Akiyama K."/>
            <person name="Ansari Y."/>
            <person name="Arakawa T."/>
            <person name="Banh J."/>
            <person name="Banno F."/>
            <person name="Bowser L."/>
            <person name="Brooks S.Y."/>
            <person name="Carninci P."/>
            <person name="Chao Q."/>
            <person name="Choy N."/>
            <person name="Enju A."/>
            <person name="Goldsmith A.D."/>
            <person name="Gurjal M."/>
            <person name="Hansen N.F."/>
            <person name="Hayashizaki Y."/>
            <person name="Johnson-Hopson C."/>
            <person name="Hsuan V.W."/>
            <person name="Iida K."/>
            <person name="Karnes M."/>
            <person name="Khan S."/>
            <person name="Koesema E."/>
            <person name="Ishida J."/>
            <person name="Jiang P.X."/>
            <person name="Jones T."/>
            <person name="Kawai J."/>
            <person name="Kamiya A."/>
            <person name="Meyers C."/>
            <person name="Nakajima M."/>
            <person name="Narusaka M."/>
            <person name="Seki M."/>
            <person name="Sakurai T."/>
            <person name="Satou M."/>
            <person name="Tamse R."/>
            <person name="Vaysberg M."/>
            <person name="Wallender E.K."/>
            <person name="Wong C."/>
            <person name="Yamamura Y."/>
            <person name="Yuan S."/>
            <person name="Shinozaki K."/>
            <person name="Davis R.W."/>
            <person name="Theologis A."/>
            <person name="Ecker J.R."/>
        </authorList>
    </citation>
    <scope>NUCLEOTIDE SEQUENCE [LARGE SCALE MRNA]</scope>
    <source>
        <strain>cv. Columbia</strain>
    </source>
</reference>
<reference key="6">
    <citation type="journal article" date="2001" name="Plant Physiol.">
        <title>Differential expression of members of the annexin multigene family in Arabidopsis.</title>
        <authorList>
            <person name="Clark G.B."/>
            <person name="Sessions A."/>
            <person name="Eastburn D.J."/>
            <person name="Roux S.J."/>
        </authorList>
    </citation>
    <scope>TISSUE SPECIFICITY</scope>
</reference>
<reference key="7">
    <citation type="journal article" date="2004" name="Plant Cell">
        <title>Proteomic identification of annexins, calcium-dependent membrane binding proteins that mediate osmotic stress and abscisic acid signal transduction in Arabidopsis.</title>
        <authorList>
            <person name="Lee S."/>
            <person name="Lee E.J."/>
            <person name="Yang E.J."/>
            <person name="Lee J.E."/>
            <person name="Park A.R."/>
            <person name="Song W.H."/>
            <person name="Park O.K."/>
        </authorList>
    </citation>
    <scope>FUNCTION</scope>
    <scope>INDUCTION</scope>
    <scope>SUBCELLULAR LOCATION</scope>
    <scope>DISRUPTION PHENOTYPE</scope>
</reference>
<reference key="8">
    <citation type="journal article" date="2006" name="Plant Physiol. Biochem.">
        <title>Expression profiling of the Arabidopsis annexin gene family during germination, de-etiolation and abiotic stress.</title>
        <authorList>
            <person name="Cantero A."/>
            <person name="Barthakur S."/>
            <person name="Bushart T.J."/>
            <person name="Chou S."/>
            <person name="Morgan R.O."/>
            <person name="Fernandez M.P."/>
            <person name="Clark G.B."/>
            <person name="Roux S.J."/>
        </authorList>
    </citation>
    <scope>INDUCTION</scope>
    <scope>GENE FAMILY</scope>
</reference>
<reference key="9">
    <citation type="journal article" date="2015" name="FEBS Lett.">
        <title>Arabidopsis Yak1 protein (AtYak1) is a dual specificity protein kinase.</title>
        <authorList>
            <person name="Kim D."/>
            <person name="Ntui V.O."/>
            <person name="Zhang N."/>
            <person name="Xiong L."/>
        </authorList>
    </citation>
    <scope>IDENTIFICATION BY MASS SPECTROMETRY</scope>
    <scope>PHOSPHORYLATION AT TYR-211 AND SER-277</scope>
</reference>
<dbReference type="EMBL" id="AF188363">
    <property type="protein sequence ID" value="AAF14581.1"/>
    <property type="molecule type" value="mRNA"/>
</dbReference>
<dbReference type="EMBL" id="AC005499">
    <property type="protein sequence ID" value="AAC67343.1"/>
    <property type="molecule type" value="Genomic_DNA"/>
</dbReference>
<dbReference type="EMBL" id="CP002685">
    <property type="protein sequence ID" value="AEC09580.1"/>
    <property type="molecule type" value="Genomic_DNA"/>
</dbReference>
<dbReference type="EMBL" id="AY087194">
    <property type="protein sequence ID" value="AAM64750.1"/>
    <property type="molecule type" value="mRNA"/>
</dbReference>
<dbReference type="EMBL" id="AY042835">
    <property type="protein sequence ID" value="AAK68775.1"/>
    <property type="molecule type" value="mRNA"/>
</dbReference>
<dbReference type="EMBL" id="AY081483">
    <property type="protein sequence ID" value="AAM10045.1"/>
    <property type="molecule type" value="mRNA"/>
</dbReference>
<dbReference type="PIR" id="H84808">
    <property type="entry name" value="H84808"/>
</dbReference>
<dbReference type="RefSeq" id="NP_181409.1">
    <property type="nucleotide sequence ID" value="NM_129432.3"/>
</dbReference>
<dbReference type="SMR" id="Q9ZVJ6"/>
<dbReference type="BioGRID" id="3799">
    <property type="interactions" value="13"/>
</dbReference>
<dbReference type="FunCoup" id="Q9ZVJ6">
    <property type="interactions" value="105"/>
</dbReference>
<dbReference type="IntAct" id="Q9ZVJ6">
    <property type="interactions" value="7"/>
</dbReference>
<dbReference type="MINT" id="Q9ZVJ6"/>
<dbReference type="STRING" id="3702.Q9ZVJ6"/>
<dbReference type="GlyGen" id="Q9ZVJ6">
    <property type="glycosylation" value="1 site"/>
</dbReference>
<dbReference type="iPTMnet" id="Q9ZVJ6"/>
<dbReference type="PaxDb" id="3702-AT2G38750.1"/>
<dbReference type="EnsemblPlants" id="AT2G38750.1">
    <property type="protein sequence ID" value="AT2G38750.1"/>
    <property type="gene ID" value="AT2G38750"/>
</dbReference>
<dbReference type="GeneID" id="818457"/>
<dbReference type="Gramene" id="AT2G38750.1">
    <property type="protein sequence ID" value="AT2G38750.1"/>
    <property type="gene ID" value="AT2G38750"/>
</dbReference>
<dbReference type="KEGG" id="ath:AT2G38750"/>
<dbReference type="Araport" id="AT2G38750"/>
<dbReference type="TAIR" id="AT2G38750">
    <property type="gene designation" value="ANNAT4"/>
</dbReference>
<dbReference type="eggNOG" id="KOG0819">
    <property type="taxonomic scope" value="Eukaryota"/>
</dbReference>
<dbReference type="HOGENOM" id="CLU_025300_1_0_1"/>
<dbReference type="InParanoid" id="Q9ZVJ6"/>
<dbReference type="PhylomeDB" id="Q9ZVJ6"/>
<dbReference type="PRO" id="PR:Q9ZVJ6"/>
<dbReference type="Proteomes" id="UP000006548">
    <property type="component" value="Chromosome 2"/>
</dbReference>
<dbReference type="ExpressionAtlas" id="Q9ZVJ6">
    <property type="expression patterns" value="baseline and differential"/>
</dbReference>
<dbReference type="GO" id="GO:0005794">
    <property type="term" value="C:Golgi apparatus"/>
    <property type="evidence" value="ECO:0007005"/>
    <property type="project" value="TAIR"/>
</dbReference>
<dbReference type="GO" id="GO:0009506">
    <property type="term" value="C:plasmodesma"/>
    <property type="evidence" value="ECO:0007005"/>
    <property type="project" value="TAIR"/>
</dbReference>
<dbReference type="GO" id="GO:0005509">
    <property type="term" value="F:calcium ion binding"/>
    <property type="evidence" value="ECO:0000250"/>
    <property type="project" value="UniProtKB"/>
</dbReference>
<dbReference type="GO" id="GO:0005544">
    <property type="term" value="F:calcium-dependent phospholipid binding"/>
    <property type="evidence" value="ECO:0007669"/>
    <property type="project" value="UniProtKB-KW"/>
</dbReference>
<dbReference type="GO" id="GO:0003729">
    <property type="term" value="F:mRNA binding"/>
    <property type="evidence" value="ECO:0007005"/>
    <property type="project" value="TAIR"/>
</dbReference>
<dbReference type="GO" id="GO:0009737">
    <property type="term" value="P:response to abscisic acid"/>
    <property type="evidence" value="ECO:0000315"/>
    <property type="project" value="TAIR"/>
</dbReference>
<dbReference type="GO" id="GO:0009409">
    <property type="term" value="P:response to cold"/>
    <property type="evidence" value="ECO:0000270"/>
    <property type="project" value="TAIR"/>
</dbReference>
<dbReference type="GO" id="GO:0009408">
    <property type="term" value="P:response to heat"/>
    <property type="evidence" value="ECO:0000270"/>
    <property type="project" value="TAIR"/>
</dbReference>
<dbReference type="GO" id="GO:0006970">
    <property type="term" value="P:response to osmotic stress"/>
    <property type="evidence" value="ECO:0000315"/>
    <property type="project" value="TAIR"/>
</dbReference>
<dbReference type="GO" id="GO:0009651">
    <property type="term" value="P:response to salt stress"/>
    <property type="evidence" value="ECO:0000270"/>
    <property type="project" value="TAIR"/>
</dbReference>
<dbReference type="GO" id="GO:0009414">
    <property type="term" value="P:response to water deprivation"/>
    <property type="evidence" value="ECO:0000270"/>
    <property type="project" value="TAIR"/>
</dbReference>
<dbReference type="FunFam" id="1.10.220.10:FF:000006">
    <property type="entry name" value="Annexin"/>
    <property type="match status" value="1"/>
</dbReference>
<dbReference type="FunFam" id="1.10.220.10:FF:000014">
    <property type="entry name" value="annexin D4"/>
    <property type="match status" value="1"/>
</dbReference>
<dbReference type="Gene3D" id="1.10.220.10">
    <property type="entry name" value="Annexin"/>
    <property type="match status" value="3"/>
</dbReference>
<dbReference type="InterPro" id="IPR001464">
    <property type="entry name" value="Annexin"/>
</dbReference>
<dbReference type="InterPro" id="IPR018502">
    <property type="entry name" value="Annexin_repeat"/>
</dbReference>
<dbReference type="InterPro" id="IPR037104">
    <property type="entry name" value="Annexin_sf"/>
</dbReference>
<dbReference type="PANTHER" id="PTHR10502">
    <property type="entry name" value="ANNEXIN"/>
    <property type="match status" value="1"/>
</dbReference>
<dbReference type="PANTHER" id="PTHR10502:SF196">
    <property type="entry name" value="ANNEXIN D4"/>
    <property type="match status" value="1"/>
</dbReference>
<dbReference type="Pfam" id="PF00191">
    <property type="entry name" value="Annexin"/>
    <property type="match status" value="2"/>
</dbReference>
<dbReference type="PRINTS" id="PR00196">
    <property type="entry name" value="ANNEXIN"/>
</dbReference>
<dbReference type="SMART" id="SM00335">
    <property type="entry name" value="ANX"/>
    <property type="match status" value="2"/>
</dbReference>
<dbReference type="SUPFAM" id="SSF47874">
    <property type="entry name" value="Annexin"/>
    <property type="match status" value="1"/>
</dbReference>
<dbReference type="PROSITE" id="PS51897">
    <property type="entry name" value="ANNEXIN_2"/>
    <property type="match status" value="4"/>
</dbReference>
<proteinExistence type="evidence at protein level"/>
<accession>Q9ZVJ6</accession>